<organism>
    <name type="scientific">Mycobacterium avium (strain 104)</name>
    <dbReference type="NCBI Taxonomy" id="243243"/>
    <lineage>
        <taxon>Bacteria</taxon>
        <taxon>Bacillati</taxon>
        <taxon>Actinomycetota</taxon>
        <taxon>Actinomycetes</taxon>
        <taxon>Mycobacteriales</taxon>
        <taxon>Mycobacteriaceae</taxon>
        <taxon>Mycobacterium</taxon>
        <taxon>Mycobacterium avium complex (MAC)</taxon>
    </lineage>
</organism>
<name>Y4764_MYCA1</name>
<sequence>MAATAEVGVTATLGAAARAVATRQGLLNDPYAEPLLGAVGIDYLTRAIADHTFAADESPVGDDPAVTSLLDALAAHTRFVDEFLAEAGRAGIRQVVILASGLDTRPYRLWWPRGTTVYEIDRPRVLDFKAGVLRGLDARLATNRCAVGIDLRDDWPAALRRVGFDAAQPTAWVAEQLLVGYLKPAEQNRLLRRLTAASAAGSRLAADHLPTWDPLQLEAERAFVEGWRRRGLDIDLASLTHPGEYHYVPEYLATHGWEPAARSIADLLGALGLGPRRRAGSGGAQFIPEYVTATRV</sequence>
<dbReference type="EC" id="2.1.1.-"/>
<dbReference type="EMBL" id="CP000479">
    <property type="protein sequence ID" value="ABK65801.1"/>
    <property type="molecule type" value="Genomic_DNA"/>
</dbReference>
<dbReference type="RefSeq" id="WP_011726233.1">
    <property type="nucleotide sequence ID" value="NC_008595.1"/>
</dbReference>
<dbReference type="SMR" id="A0QLV3"/>
<dbReference type="KEGG" id="mav:MAV_4764"/>
<dbReference type="HOGENOM" id="CLU_056160_2_1_11"/>
<dbReference type="Proteomes" id="UP000001574">
    <property type="component" value="Chromosome"/>
</dbReference>
<dbReference type="GO" id="GO:0008168">
    <property type="term" value="F:methyltransferase activity"/>
    <property type="evidence" value="ECO:0007669"/>
    <property type="project" value="UniProtKB-KW"/>
</dbReference>
<dbReference type="GO" id="GO:0032259">
    <property type="term" value="P:methylation"/>
    <property type="evidence" value="ECO:0007669"/>
    <property type="project" value="UniProtKB-KW"/>
</dbReference>
<dbReference type="Gene3D" id="3.40.50.150">
    <property type="entry name" value="Vaccinia Virus protein VP39"/>
    <property type="match status" value="1"/>
</dbReference>
<dbReference type="InterPro" id="IPR007213">
    <property type="entry name" value="Ppm1/Ppm2/Tcmp"/>
</dbReference>
<dbReference type="InterPro" id="IPR029063">
    <property type="entry name" value="SAM-dependent_MTases_sf"/>
</dbReference>
<dbReference type="InterPro" id="IPR011610">
    <property type="entry name" value="SAM_mthyl_Trfase_ML2640-like"/>
</dbReference>
<dbReference type="NCBIfam" id="TIGR00027">
    <property type="entry name" value="mthyl_TIGR00027"/>
    <property type="match status" value="1"/>
</dbReference>
<dbReference type="PANTHER" id="PTHR43619">
    <property type="entry name" value="S-ADENOSYL-L-METHIONINE-DEPENDENT METHYLTRANSFERASE YKTD-RELATED"/>
    <property type="match status" value="1"/>
</dbReference>
<dbReference type="PANTHER" id="PTHR43619:SF2">
    <property type="entry name" value="S-ADENOSYL-L-METHIONINE-DEPENDENT METHYLTRANSFERASES SUPERFAMILY PROTEIN"/>
    <property type="match status" value="1"/>
</dbReference>
<dbReference type="Pfam" id="PF04072">
    <property type="entry name" value="LCM"/>
    <property type="match status" value="1"/>
</dbReference>
<dbReference type="SUPFAM" id="SSF53335">
    <property type="entry name" value="S-adenosyl-L-methionine-dependent methyltransferases"/>
    <property type="match status" value="1"/>
</dbReference>
<evidence type="ECO:0000250" key="1"/>
<evidence type="ECO:0000305" key="2"/>
<accession>A0QLV3</accession>
<gene>
    <name type="ordered locus">MAV_4764</name>
</gene>
<keyword id="KW-0489">Methyltransferase</keyword>
<keyword id="KW-0949">S-adenosyl-L-methionine</keyword>
<keyword id="KW-0808">Transferase</keyword>
<protein>
    <recommendedName>
        <fullName>Putative S-adenosyl-L-methionine-dependent methyltransferase MAV_4764</fullName>
        <ecNumber>2.1.1.-</ecNumber>
    </recommendedName>
</protein>
<proteinExistence type="inferred from homology"/>
<comment type="function">
    <text evidence="1">Exhibits S-adenosyl-L-methionine-dependent methyltransferase activity.</text>
</comment>
<comment type="similarity">
    <text evidence="2">Belongs to the UPF0677 family.</text>
</comment>
<feature type="chain" id="PRO_0000361114" description="Putative S-adenosyl-L-methionine-dependent methyltransferase MAV_4764">
    <location>
        <begin position="1"/>
        <end position="296"/>
    </location>
</feature>
<feature type="binding site" evidence="1">
    <location>
        <position position="121"/>
    </location>
    <ligand>
        <name>S-adenosyl-L-methionine</name>
        <dbReference type="ChEBI" id="CHEBI:59789"/>
    </ligand>
</feature>
<feature type="binding site" evidence="1">
    <location>
        <begin position="150"/>
        <end position="151"/>
    </location>
    <ligand>
        <name>S-adenosyl-L-methionine</name>
        <dbReference type="ChEBI" id="CHEBI:59789"/>
    </ligand>
</feature>
<reference key="1">
    <citation type="submission" date="2006-10" db="EMBL/GenBank/DDBJ databases">
        <authorList>
            <person name="Fleischmann R.D."/>
            <person name="Dodson R.J."/>
            <person name="Haft D.H."/>
            <person name="Merkel J.S."/>
            <person name="Nelson W.C."/>
            <person name="Fraser C.M."/>
        </authorList>
    </citation>
    <scope>NUCLEOTIDE SEQUENCE [LARGE SCALE GENOMIC DNA]</scope>
    <source>
        <strain>104</strain>
    </source>
</reference>